<protein>
    <recommendedName>
        <fullName evidence="1">Small ribosomal subunit protein uS17</fullName>
    </recommendedName>
    <alternativeName>
        <fullName evidence="2">30S ribosomal protein S17</fullName>
    </alternativeName>
</protein>
<reference key="1">
    <citation type="submission" date="2007-10" db="EMBL/GenBank/DDBJ databases">
        <title>Genome sequence of Campylobacter concisus 13826 isolated from human feces.</title>
        <authorList>
            <person name="Fouts D.E."/>
            <person name="Mongodin E.F."/>
            <person name="Puiu D."/>
            <person name="Sebastian Y."/>
            <person name="Miller W.G."/>
            <person name="Mandrell R.E."/>
            <person name="On S."/>
            <person name="Nelson K.E."/>
        </authorList>
    </citation>
    <scope>NUCLEOTIDE SEQUENCE [LARGE SCALE GENOMIC DNA]</scope>
    <source>
        <strain>13826</strain>
    </source>
</reference>
<sequence>MALKREIQGVVLQKAGDKTATILVERRVMHPRYHKFVKRFKKYLVHDEKNETRAGDTVVAVECRPLSARKNFRLKAVLAKGVE</sequence>
<proteinExistence type="inferred from homology"/>
<name>RS17_CAMC1</name>
<dbReference type="EMBL" id="CP000792">
    <property type="protein sequence ID" value="EAT98109.2"/>
    <property type="molecule type" value="Genomic_DNA"/>
</dbReference>
<dbReference type="RefSeq" id="WP_002941511.1">
    <property type="nucleotide sequence ID" value="NC_009802.2"/>
</dbReference>
<dbReference type="SMR" id="A7ZG03"/>
<dbReference type="STRING" id="360104.CCC13826_1768"/>
<dbReference type="KEGG" id="cco:CCC13826_1768"/>
<dbReference type="eggNOG" id="COG0186">
    <property type="taxonomic scope" value="Bacteria"/>
</dbReference>
<dbReference type="HOGENOM" id="CLU_073626_1_1_7"/>
<dbReference type="OrthoDB" id="9811714at2"/>
<dbReference type="Proteomes" id="UP000001121">
    <property type="component" value="Chromosome"/>
</dbReference>
<dbReference type="GO" id="GO:0022627">
    <property type="term" value="C:cytosolic small ribosomal subunit"/>
    <property type="evidence" value="ECO:0007669"/>
    <property type="project" value="TreeGrafter"/>
</dbReference>
<dbReference type="GO" id="GO:0019843">
    <property type="term" value="F:rRNA binding"/>
    <property type="evidence" value="ECO:0007669"/>
    <property type="project" value="UniProtKB-UniRule"/>
</dbReference>
<dbReference type="GO" id="GO:0003735">
    <property type="term" value="F:structural constituent of ribosome"/>
    <property type="evidence" value="ECO:0007669"/>
    <property type="project" value="InterPro"/>
</dbReference>
<dbReference type="GO" id="GO:0006412">
    <property type="term" value="P:translation"/>
    <property type="evidence" value="ECO:0007669"/>
    <property type="project" value="UniProtKB-UniRule"/>
</dbReference>
<dbReference type="CDD" id="cd00364">
    <property type="entry name" value="Ribosomal_uS17"/>
    <property type="match status" value="1"/>
</dbReference>
<dbReference type="Gene3D" id="2.40.50.140">
    <property type="entry name" value="Nucleic acid-binding proteins"/>
    <property type="match status" value="1"/>
</dbReference>
<dbReference type="HAMAP" id="MF_01345_B">
    <property type="entry name" value="Ribosomal_uS17_B"/>
    <property type="match status" value="1"/>
</dbReference>
<dbReference type="InterPro" id="IPR012340">
    <property type="entry name" value="NA-bd_OB-fold"/>
</dbReference>
<dbReference type="InterPro" id="IPR000266">
    <property type="entry name" value="Ribosomal_uS17"/>
</dbReference>
<dbReference type="InterPro" id="IPR019984">
    <property type="entry name" value="Ribosomal_uS17_bact/chlr"/>
</dbReference>
<dbReference type="InterPro" id="IPR019979">
    <property type="entry name" value="Ribosomal_uS17_CS"/>
</dbReference>
<dbReference type="NCBIfam" id="NF004123">
    <property type="entry name" value="PRK05610.1"/>
    <property type="match status" value="1"/>
</dbReference>
<dbReference type="NCBIfam" id="TIGR03635">
    <property type="entry name" value="uS17_bact"/>
    <property type="match status" value="1"/>
</dbReference>
<dbReference type="PANTHER" id="PTHR10744">
    <property type="entry name" value="40S RIBOSOMAL PROTEIN S11 FAMILY MEMBER"/>
    <property type="match status" value="1"/>
</dbReference>
<dbReference type="PANTHER" id="PTHR10744:SF1">
    <property type="entry name" value="SMALL RIBOSOMAL SUBUNIT PROTEIN US17M"/>
    <property type="match status" value="1"/>
</dbReference>
<dbReference type="Pfam" id="PF00366">
    <property type="entry name" value="Ribosomal_S17"/>
    <property type="match status" value="1"/>
</dbReference>
<dbReference type="PRINTS" id="PR00973">
    <property type="entry name" value="RIBOSOMALS17"/>
</dbReference>
<dbReference type="SUPFAM" id="SSF50249">
    <property type="entry name" value="Nucleic acid-binding proteins"/>
    <property type="match status" value="1"/>
</dbReference>
<dbReference type="PROSITE" id="PS00056">
    <property type="entry name" value="RIBOSOMAL_S17"/>
    <property type="match status" value="1"/>
</dbReference>
<organism>
    <name type="scientific">Campylobacter concisus (strain 13826)</name>
    <dbReference type="NCBI Taxonomy" id="360104"/>
    <lineage>
        <taxon>Bacteria</taxon>
        <taxon>Pseudomonadati</taxon>
        <taxon>Campylobacterota</taxon>
        <taxon>Epsilonproteobacteria</taxon>
        <taxon>Campylobacterales</taxon>
        <taxon>Campylobacteraceae</taxon>
        <taxon>Campylobacter</taxon>
    </lineage>
</organism>
<evidence type="ECO:0000255" key="1">
    <source>
        <dbReference type="HAMAP-Rule" id="MF_01345"/>
    </source>
</evidence>
<evidence type="ECO:0000305" key="2"/>
<gene>
    <name evidence="1" type="primary">rpsQ</name>
    <name type="ordered locus">Ccon26_18760</name>
    <name type="ORF">CCC13826_1768</name>
</gene>
<keyword id="KW-0687">Ribonucleoprotein</keyword>
<keyword id="KW-0689">Ribosomal protein</keyword>
<keyword id="KW-0694">RNA-binding</keyword>
<keyword id="KW-0699">rRNA-binding</keyword>
<feature type="chain" id="PRO_1000054932" description="Small ribosomal subunit protein uS17">
    <location>
        <begin position="1"/>
        <end position="83"/>
    </location>
</feature>
<comment type="function">
    <text evidence="1">One of the primary rRNA binding proteins, it binds specifically to the 5'-end of 16S ribosomal RNA.</text>
</comment>
<comment type="subunit">
    <text evidence="1">Part of the 30S ribosomal subunit.</text>
</comment>
<comment type="similarity">
    <text evidence="1">Belongs to the universal ribosomal protein uS17 family.</text>
</comment>
<accession>A7ZG03</accession>